<accession>Q1JNA3</accession>
<feature type="chain" id="PRO_0000273310" description="Segregation and condensation protein B">
    <location>
        <begin position="1"/>
        <end position="183"/>
    </location>
</feature>
<protein>
    <recommendedName>
        <fullName evidence="1">Segregation and condensation protein B</fullName>
    </recommendedName>
</protein>
<comment type="function">
    <text evidence="1">Participates in chromosomal partition during cell division. May act via the formation of a condensin-like complex containing Smc and ScpA that pull DNA away from mid-cell into both cell halves.</text>
</comment>
<comment type="subunit">
    <text evidence="1">Homodimer. Homodimerization may be required to stabilize the binding of ScpA to the Smc head domains. Component of a cohesin-like complex composed of ScpA, ScpB and the Smc homodimer, in which ScpA and ScpB bind to the head domain of Smc. The presence of the three proteins is required for the association of the complex with DNA.</text>
</comment>
<comment type="subcellular location">
    <subcellularLocation>
        <location evidence="1">Cytoplasm</location>
    </subcellularLocation>
    <text evidence="1">Associated with two foci at the outer edges of the nucleoid region in young cells, and at four foci within both cell halves in older cells.</text>
</comment>
<comment type="similarity">
    <text evidence="1">Belongs to the ScpB family.</text>
</comment>
<dbReference type="EMBL" id="CP000259">
    <property type="protein sequence ID" value="ABF31496.1"/>
    <property type="molecule type" value="Genomic_DNA"/>
</dbReference>
<dbReference type="RefSeq" id="WP_002990969.1">
    <property type="nucleotide sequence ID" value="NC_008021.1"/>
</dbReference>
<dbReference type="SMR" id="Q1JNA3"/>
<dbReference type="KEGG" id="spk:MGAS9429_Spy0308"/>
<dbReference type="HOGENOM" id="CLU_045647_5_3_9"/>
<dbReference type="Proteomes" id="UP000002433">
    <property type="component" value="Chromosome"/>
</dbReference>
<dbReference type="GO" id="GO:0005737">
    <property type="term" value="C:cytoplasm"/>
    <property type="evidence" value="ECO:0007669"/>
    <property type="project" value="UniProtKB-SubCell"/>
</dbReference>
<dbReference type="GO" id="GO:0051301">
    <property type="term" value="P:cell division"/>
    <property type="evidence" value="ECO:0007669"/>
    <property type="project" value="UniProtKB-KW"/>
</dbReference>
<dbReference type="GO" id="GO:0051304">
    <property type="term" value="P:chromosome separation"/>
    <property type="evidence" value="ECO:0007669"/>
    <property type="project" value="InterPro"/>
</dbReference>
<dbReference type="GO" id="GO:0006260">
    <property type="term" value="P:DNA replication"/>
    <property type="evidence" value="ECO:0007669"/>
    <property type="project" value="UniProtKB-UniRule"/>
</dbReference>
<dbReference type="Gene3D" id="1.10.10.10">
    <property type="entry name" value="Winged helix-like DNA-binding domain superfamily/Winged helix DNA-binding domain"/>
    <property type="match status" value="2"/>
</dbReference>
<dbReference type="HAMAP" id="MF_01804">
    <property type="entry name" value="ScpB"/>
    <property type="match status" value="1"/>
</dbReference>
<dbReference type="InterPro" id="IPR005234">
    <property type="entry name" value="ScpB_csome_segregation"/>
</dbReference>
<dbReference type="InterPro" id="IPR036388">
    <property type="entry name" value="WH-like_DNA-bd_sf"/>
</dbReference>
<dbReference type="InterPro" id="IPR036390">
    <property type="entry name" value="WH_DNA-bd_sf"/>
</dbReference>
<dbReference type="NCBIfam" id="TIGR00281">
    <property type="entry name" value="SMC-Scp complex subunit ScpB"/>
    <property type="match status" value="1"/>
</dbReference>
<dbReference type="PANTHER" id="PTHR34298">
    <property type="entry name" value="SEGREGATION AND CONDENSATION PROTEIN B"/>
    <property type="match status" value="1"/>
</dbReference>
<dbReference type="PANTHER" id="PTHR34298:SF2">
    <property type="entry name" value="SEGREGATION AND CONDENSATION PROTEIN B"/>
    <property type="match status" value="1"/>
</dbReference>
<dbReference type="Pfam" id="PF04079">
    <property type="entry name" value="SMC_ScpB"/>
    <property type="match status" value="1"/>
</dbReference>
<dbReference type="PIRSF" id="PIRSF019345">
    <property type="entry name" value="ScpB"/>
    <property type="match status" value="1"/>
</dbReference>
<dbReference type="SUPFAM" id="SSF46785">
    <property type="entry name" value="Winged helix' DNA-binding domain"/>
    <property type="match status" value="2"/>
</dbReference>
<organism>
    <name type="scientific">Streptococcus pyogenes serotype M12 (strain MGAS9429)</name>
    <dbReference type="NCBI Taxonomy" id="370551"/>
    <lineage>
        <taxon>Bacteria</taxon>
        <taxon>Bacillati</taxon>
        <taxon>Bacillota</taxon>
        <taxon>Bacilli</taxon>
        <taxon>Lactobacillales</taxon>
        <taxon>Streptococcaceae</taxon>
        <taxon>Streptococcus</taxon>
    </lineage>
</organism>
<proteinExistence type="inferred from homology"/>
<reference key="1">
    <citation type="journal article" date="2006" name="Proc. Natl. Acad. Sci. U.S.A.">
        <title>Molecular genetic anatomy of inter- and intraserotype variation in the human bacterial pathogen group A Streptococcus.</title>
        <authorList>
            <person name="Beres S.B."/>
            <person name="Richter E.W."/>
            <person name="Nagiec M.J."/>
            <person name="Sumby P."/>
            <person name="Porcella S.F."/>
            <person name="DeLeo F.R."/>
            <person name="Musser J.M."/>
        </authorList>
    </citation>
    <scope>NUCLEOTIDE SEQUENCE [LARGE SCALE GENOMIC DNA]</scope>
    <source>
        <strain>MGAS9429</strain>
    </source>
</reference>
<sequence>MTYLSQIEALLFVAGEEGLSLRHLASMLSLTPTALQQQLEKLSQKYEKDQHSSLCLIETANTYRLVTKEGFAGLLRAYAKTPMNQSLSRASLEVLSIVAYKQPITRIEIDDIRGVNSSGALSKLLAFDLIREAGKKDVVGRPHLYATTDYFLDYMGINHLDELIEVSAVEPADEEIALFRTQD</sequence>
<keyword id="KW-0131">Cell cycle</keyword>
<keyword id="KW-0132">Cell division</keyword>
<keyword id="KW-0159">Chromosome partition</keyword>
<keyword id="KW-0963">Cytoplasm</keyword>
<gene>
    <name evidence="1" type="primary">scpB</name>
    <name type="ordered locus">MGAS9429_Spy0308</name>
</gene>
<name>SCPB_STRPC</name>
<evidence type="ECO:0000255" key="1">
    <source>
        <dbReference type="HAMAP-Rule" id="MF_01804"/>
    </source>
</evidence>